<feature type="chain" id="PRO_0000134128" description="Small ribosomal subunit protein uS2">
    <location>
        <begin position="1"/>
        <end position="233"/>
    </location>
</feature>
<name>RS2_BACHK</name>
<reference key="1">
    <citation type="journal article" date="2006" name="J. Bacteriol.">
        <title>Pathogenomic sequence analysis of Bacillus cereus and Bacillus thuringiensis isolates closely related to Bacillus anthracis.</title>
        <authorList>
            <person name="Han C.S."/>
            <person name="Xie G."/>
            <person name="Challacombe J.F."/>
            <person name="Altherr M.R."/>
            <person name="Bhotika S.S."/>
            <person name="Bruce D."/>
            <person name="Campbell C.S."/>
            <person name="Campbell M.L."/>
            <person name="Chen J."/>
            <person name="Chertkov O."/>
            <person name="Cleland C."/>
            <person name="Dimitrijevic M."/>
            <person name="Doggett N.A."/>
            <person name="Fawcett J.J."/>
            <person name="Glavina T."/>
            <person name="Goodwin L.A."/>
            <person name="Hill K.K."/>
            <person name="Hitchcock P."/>
            <person name="Jackson P.J."/>
            <person name="Keim P."/>
            <person name="Kewalramani A.R."/>
            <person name="Longmire J."/>
            <person name="Lucas S."/>
            <person name="Malfatti S."/>
            <person name="McMurry K."/>
            <person name="Meincke L.J."/>
            <person name="Misra M."/>
            <person name="Moseman B.L."/>
            <person name="Mundt M."/>
            <person name="Munk A.C."/>
            <person name="Okinaka R.T."/>
            <person name="Parson-Quintana B."/>
            <person name="Reilly L.P."/>
            <person name="Richardson P."/>
            <person name="Robinson D.L."/>
            <person name="Rubin E."/>
            <person name="Saunders E."/>
            <person name="Tapia R."/>
            <person name="Tesmer J.G."/>
            <person name="Thayer N."/>
            <person name="Thompson L.S."/>
            <person name="Tice H."/>
            <person name="Ticknor L.O."/>
            <person name="Wills P.L."/>
            <person name="Brettin T.S."/>
            <person name="Gilna P."/>
        </authorList>
    </citation>
    <scope>NUCLEOTIDE SEQUENCE [LARGE SCALE GENOMIC DNA]</scope>
    <source>
        <strain>97-27</strain>
    </source>
</reference>
<accession>Q6HEY8</accession>
<organism>
    <name type="scientific">Bacillus thuringiensis subsp. konkukian (strain 97-27)</name>
    <dbReference type="NCBI Taxonomy" id="281309"/>
    <lineage>
        <taxon>Bacteria</taxon>
        <taxon>Bacillati</taxon>
        <taxon>Bacillota</taxon>
        <taxon>Bacilli</taxon>
        <taxon>Bacillales</taxon>
        <taxon>Bacillaceae</taxon>
        <taxon>Bacillus</taxon>
        <taxon>Bacillus cereus group</taxon>
    </lineage>
</organism>
<protein>
    <recommendedName>
        <fullName evidence="1">Small ribosomal subunit protein uS2</fullName>
    </recommendedName>
    <alternativeName>
        <fullName evidence="2">30S ribosomal protein S2</fullName>
    </alternativeName>
</protein>
<gene>
    <name evidence="1" type="primary">rpsB</name>
    <name type="ordered locus">BT9727_3568</name>
</gene>
<keyword id="KW-0687">Ribonucleoprotein</keyword>
<keyword id="KW-0689">Ribosomal protein</keyword>
<dbReference type="EMBL" id="AE017355">
    <property type="protein sequence ID" value="AAT60601.1"/>
    <property type="molecule type" value="Genomic_DNA"/>
</dbReference>
<dbReference type="RefSeq" id="WP_000111483.1">
    <property type="nucleotide sequence ID" value="NC_005957.1"/>
</dbReference>
<dbReference type="RefSeq" id="YP_037888.1">
    <property type="nucleotide sequence ID" value="NC_005957.1"/>
</dbReference>
<dbReference type="SMR" id="Q6HEY8"/>
<dbReference type="GeneID" id="75086962"/>
<dbReference type="KEGG" id="btk:BT9727_3568"/>
<dbReference type="PATRIC" id="fig|281309.8.peg.3806"/>
<dbReference type="HOGENOM" id="CLU_040318_1_2_9"/>
<dbReference type="Proteomes" id="UP000001301">
    <property type="component" value="Chromosome"/>
</dbReference>
<dbReference type="GO" id="GO:0022627">
    <property type="term" value="C:cytosolic small ribosomal subunit"/>
    <property type="evidence" value="ECO:0007669"/>
    <property type="project" value="TreeGrafter"/>
</dbReference>
<dbReference type="GO" id="GO:0003735">
    <property type="term" value="F:structural constituent of ribosome"/>
    <property type="evidence" value="ECO:0007669"/>
    <property type="project" value="InterPro"/>
</dbReference>
<dbReference type="GO" id="GO:0006412">
    <property type="term" value="P:translation"/>
    <property type="evidence" value="ECO:0007669"/>
    <property type="project" value="UniProtKB-UniRule"/>
</dbReference>
<dbReference type="CDD" id="cd01425">
    <property type="entry name" value="RPS2"/>
    <property type="match status" value="1"/>
</dbReference>
<dbReference type="FunFam" id="1.10.287.610:FF:000001">
    <property type="entry name" value="30S ribosomal protein S2"/>
    <property type="match status" value="1"/>
</dbReference>
<dbReference type="Gene3D" id="3.40.50.10490">
    <property type="entry name" value="Glucose-6-phosphate isomerase like protein, domain 1"/>
    <property type="match status" value="1"/>
</dbReference>
<dbReference type="Gene3D" id="1.10.287.610">
    <property type="entry name" value="Helix hairpin bin"/>
    <property type="match status" value="1"/>
</dbReference>
<dbReference type="HAMAP" id="MF_00291_B">
    <property type="entry name" value="Ribosomal_uS2_B"/>
    <property type="match status" value="1"/>
</dbReference>
<dbReference type="InterPro" id="IPR001865">
    <property type="entry name" value="Ribosomal_uS2"/>
</dbReference>
<dbReference type="InterPro" id="IPR005706">
    <property type="entry name" value="Ribosomal_uS2_bac/mit/plastid"/>
</dbReference>
<dbReference type="InterPro" id="IPR018130">
    <property type="entry name" value="Ribosomal_uS2_CS"/>
</dbReference>
<dbReference type="InterPro" id="IPR023591">
    <property type="entry name" value="Ribosomal_uS2_flav_dom_sf"/>
</dbReference>
<dbReference type="NCBIfam" id="TIGR01011">
    <property type="entry name" value="rpsB_bact"/>
    <property type="match status" value="1"/>
</dbReference>
<dbReference type="PANTHER" id="PTHR12534">
    <property type="entry name" value="30S RIBOSOMAL PROTEIN S2 PROKARYOTIC AND ORGANELLAR"/>
    <property type="match status" value="1"/>
</dbReference>
<dbReference type="PANTHER" id="PTHR12534:SF0">
    <property type="entry name" value="SMALL RIBOSOMAL SUBUNIT PROTEIN US2M"/>
    <property type="match status" value="1"/>
</dbReference>
<dbReference type="Pfam" id="PF00318">
    <property type="entry name" value="Ribosomal_S2"/>
    <property type="match status" value="1"/>
</dbReference>
<dbReference type="PRINTS" id="PR00395">
    <property type="entry name" value="RIBOSOMALS2"/>
</dbReference>
<dbReference type="SUPFAM" id="SSF52313">
    <property type="entry name" value="Ribosomal protein S2"/>
    <property type="match status" value="1"/>
</dbReference>
<dbReference type="PROSITE" id="PS00962">
    <property type="entry name" value="RIBOSOMAL_S2_1"/>
    <property type="match status" value="1"/>
</dbReference>
<dbReference type="PROSITE" id="PS00963">
    <property type="entry name" value="RIBOSOMAL_S2_2"/>
    <property type="match status" value="1"/>
</dbReference>
<sequence length="233" mass="26517">MSVISMKQLLEAGVHFGHQTRRWNPKMKRYIFTERNGIYIIDLQKTVKKVEEAFKVMRDIAAEGGDILFVGTKKQAQEAIKEEATRAGMYFVNQRWLGGTLTNFQTIQKRIKRLKDIERMQEDGTFEVLPKKEVVQLKKELERLEKFLGGIKDMKGLPSALFVVDPRKERIAVAEARKLHIPIIGIVDTNCDPDEIDHVIPANDDAIRAVKLLTSKMADAILEAKQGEETVTA</sequence>
<comment type="similarity">
    <text evidence="1">Belongs to the universal ribosomal protein uS2 family.</text>
</comment>
<proteinExistence type="inferred from homology"/>
<evidence type="ECO:0000255" key="1">
    <source>
        <dbReference type="HAMAP-Rule" id="MF_00291"/>
    </source>
</evidence>
<evidence type="ECO:0000305" key="2"/>